<organism>
    <name type="scientific">Escherichia coli (strain K12)</name>
    <dbReference type="NCBI Taxonomy" id="83333"/>
    <lineage>
        <taxon>Bacteria</taxon>
        <taxon>Pseudomonadati</taxon>
        <taxon>Pseudomonadota</taxon>
        <taxon>Gammaproteobacteria</taxon>
        <taxon>Enterobacterales</taxon>
        <taxon>Enterobacteriaceae</taxon>
        <taxon>Escherichia</taxon>
    </lineage>
</organism>
<feature type="chain" id="PRO_0000121390" description="Inner membrane transport protein RhmT">
    <location>
        <begin position="1"/>
        <end position="429"/>
    </location>
</feature>
<feature type="topological domain" description="Cytoplasmic" evidence="1">
    <location>
        <begin position="1"/>
        <end position="16"/>
    </location>
</feature>
<feature type="transmembrane region" description="Helical" evidence="1">
    <location>
        <begin position="17"/>
        <end position="37"/>
    </location>
</feature>
<feature type="topological domain" description="Periplasmic" evidence="1">
    <location>
        <begin position="38"/>
        <end position="54"/>
    </location>
</feature>
<feature type="transmembrane region" description="Helical" evidence="1">
    <location>
        <begin position="55"/>
        <end position="75"/>
    </location>
</feature>
<feature type="topological domain" description="Cytoplasmic" evidence="1">
    <location>
        <begin position="76"/>
        <end position="81"/>
    </location>
</feature>
<feature type="transmembrane region" description="Helical" evidence="1">
    <location>
        <begin position="82"/>
        <end position="102"/>
    </location>
</feature>
<feature type="topological domain" description="Periplasmic" evidence="1">
    <location>
        <begin position="103"/>
        <end position="143"/>
    </location>
</feature>
<feature type="transmembrane region" description="Helical" evidence="1">
    <location>
        <begin position="144"/>
        <end position="164"/>
    </location>
</feature>
<feature type="topological domain" description="Cytoplasmic" evidence="1">
    <location>
        <begin position="165"/>
        <end position="174"/>
    </location>
</feature>
<feature type="transmembrane region" description="Helical" evidence="1">
    <location>
        <begin position="175"/>
        <end position="195"/>
    </location>
</feature>
<feature type="topological domain" description="Periplasmic" evidence="1">
    <location>
        <begin position="196"/>
        <end position="242"/>
    </location>
</feature>
<feature type="transmembrane region" description="Helical" evidence="1">
    <location>
        <begin position="243"/>
        <end position="263"/>
    </location>
</feature>
<feature type="topological domain" description="Cytoplasmic" evidence="1">
    <location>
        <begin position="264"/>
        <end position="274"/>
    </location>
</feature>
<feature type="transmembrane region" description="Helical" evidence="1">
    <location>
        <begin position="275"/>
        <end position="295"/>
    </location>
</feature>
<feature type="topological domain" description="Periplasmic" evidence="1">
    <location>
        <begin position="296"/>
        <end position="324"/>
    </location>
</feature>
<feature type="transmembrane region" description="Helical" evidence="1">
    <location>
        <begin position="325"/>
        <end position="345"/>
    </location>
</feature>
<feature type="topological domain" description="Cytoplasmic" evidence="1">
    <location>
        <begin position="346"/>
        <end position="361"/>
    </location>
</feature>
<feature type="transmembrane region" description="Helical" evidence="1">
    <location>
        <begin position="362"/>
        <end position="382"/>
    </location>
</feature>
<feature type="topological domain" description="Periplasmic" evidence="1">
    <location>
        <begin position="383"/>
        <end position="394"/>
    </location>
</feature>
<feature type="transmembrane region" description="Helical" evidence="1">
    <location>
        <begin position="395"/>
        <end position="415"/>
    </location>
</feature>
<feature type="topological domain" description="Cytoplasmic" evidence="1">
    <location>
        <begin position="416"/>
        <end position="429"/>
    </location>
</feature>
<sequence>MSTALLDAVVKKNRVRLIPFMLALYVLAFLDRSNIGFAKQTYQIDTGLSNEAYALGAGIFFVVYAFLGVPANLLMRKLGARTWIGTTTLLWGFLSAAMAWADTEAKFLIVRTLLRAAEAGFFPGMIYLTSQWFPQRNRASIMGLFYMGAPLALTLGSPLSGALLEMHGFMGHPGWFWMFVIEGLLAVGAGVFTFFWLDDTPEQARFLSKQEKTLLINQLASEEQQKVTSRLSDALRNGRVWQLAIIYLTIQVAVYGLIFFLPTQVAALLGTKVGFTASVVTAIPWVAALFGTWLIPRYSDKTGERRNVAALTLLAAGIGIGLSGLLSPVMAIVALCVAAIGFIAVQPVFWTMPTQLLSGTALAAGIGFVNLFGAVGGFIAPILRVKAETLFASDAAGLLTLAAVAVIGSLIIFTLRVNRTVAQTDVAHH</sequence>
<reference key="1">
    <citation type="journal article" date="1997" name="DNA Res.">
        <title>Construction of a contiguous 874-kb sequence of the Escherichia coli-K12 genome corresponding to 50.0-68.8 min on the linkage map and analysis of its sequence features.</title>
        <authorList>
            <person name="Yamamoto Y."/>
            <person name="Aiba H."/>
            <person name="Baba T."/>
            <person name="Hayashi K."/>
            <person name="Inada T."/>
            <person name="Isono K."/>
            <person name="Itoh T."/>
            <person name="Kimura S."/>
            <person name="Kitagawa M."/>
            <person name="Makino K."/>
            <person name="Miki T."/>
            <person name="Mitsuhashi N."/>
            <person name="Mizobuchi K."/>
            <person name="Mori H."/>
            <person name="Nakade S."/>
            <person name="Nakamura Y."/>
            <person name="Nashimoto H."/>
            <person name="Oshima T."/>
            <person name="Oyama S."/>
            <person name="Saito N."/>
            <person name="Sampei G."/>
            <person name="Satoh Y."/>
            <person name="Sivasundaram S."/>
            <person name="Tagami H."/>
            <person name="Takahashi H."/>
            <person name="Takeda J."/>
            <person name="Takemoto K."/>
            <person name="Uehara K."/>
            <person name="Wada C."/>
            <person name="Yamagata S."/>
            <person name="Horiuchi T."/>
        </authorList>
    </citation>
    <scope>NUCLEOTIDE SEQUENCE [LARGE SCALE GENOMIC DNA]</scope>
    <source>
        <strain>K12 / W3110 / ATCC 27325 / DSM 5911</strain>
    </source>
</reference>
<reference key="2">
    <citation type="journal article" date="1997" name="Science">
        <title>The complete genome sequence of Escherichia coli K-12.</title>
        <authorList>
            <person name="Blattner F.R."/>
            <person name="Plunkett G. III"/>
            <person name="Bloch C.A."/>
            <person name="Perna N.T."/>
            <person name="Burland V."/>
            <person name="Riley M."/>
            <person name="Collado-Vides J."/>
            <person name="Glasner J.D."/>
            <person name="Rode C.K."/>
            <person name="Mayhew G.F."/>
            <person name="Gregor J."/>
            <person name="Davis N.W."/>
            <person name="Kirkpatrick H.A."/>
            <person name="Goeden M.A."/>
            <person name="Rose D.J."/>
            <person name="Mau B."/>
            <person name="Shao Y."/>
        </authorList>
    </citation>
    <scope>NUCLEOTIDE SEQUENCE [LARGE SCALE GENOMIC DNA]</scope>
    <source>
        <strain>K12 / MG1655 / ATCC 47076</strain>
    </source>
</reference>
<reference key="3">
    <citation type="journal article" date="2006" name="Mol. Syst. Biol.">
        <title>Highly accurate genome sequences of Escherichia coli K-12 strains MG1655 and W3110.</title>
        <authorList>
            <person name="Hayashi K."/>
            <person name="Morooka N."/>
            <person name="Yamamoto Y."/>
            <person name="Fujita K."/>
            <person name="Isono K."/>
            <person name="Choi S."/>
            <person name="Ohtsubo E."/>
            <person name="Baba T."/>
            <person name="Wanner B.L."/>
            <person name="Mori H."/>
            <person name="Horiuchi T."/>
        </authorList>
    </citation>
    <scope>NUCLEOTIDE SEQUENCE [LARGE SCALE GENOMIC DNA]</scope>
    <source>
        <strain>K12 / W3110 / ATCC 27325 / DSM 5911</strain>
    </source>
</reference>
<reference key="4">
    <citation type="journal article" date="2005" name="Science">
        <title>Global topology analysis of the Escherichia coli inner membrane proteome.</title>
        <authorList>
            <person name="Daley D.O."/>
            <person name="Rapp M."/>
            <person name="Granseth E."/>
            <person name="Melen K."/>
            <person name="Drew D."/>
            <person name="von Heijne G."/>
        </authorList>
    </citation>
    <scope>TOPOLOGY [LARGE SCALE ANALYSIS]</scope>
    <source>
        <strain>K12 / MG1655 / ATCC 47076</strain>
    </source>
</reference>
<accession>P76470</accession>
<accession>P76930</accession>
<keyword id="KW-0997">Cell inner membrane</keyword>
<keyword id="KW-1003">Cell membrane</keyword>
<keyword id="KW-0472">Membrane</keyword>
<keyword id="KW-1185">Reference proteome</keyword>
<keyword id="KW-0812">Transmembrane</keyword>
<keyword id="KW-1133">Transmembrane helix</keyword>
<keyword id="KW-0813">Transport</keyword>
<name>RHMT_ECOLI</name>
<comment type="subcellular location">
    <subcellularLocation>
        <location>Cell inner membrane</location>
        <topology>Multi-pass membrane protein</topology>
    </subcellularLocation>
</comment>
<comment type="miscellaneous">
    <text>Part of the rhmRDTA operon involved in L-rhamnonate utilization.</text>
</comment>
<comment type="similarity">
    <text evidence="2">Belongs to the major facilitator superfamily. Phthalate permease family.</text>
</comment>
<gene>
    <name type="primary">rhmT</name>
    <name type="synonym">yfaV</name>
    <name type="ordered locus">b2246</name>
    <name type="ordered locus">JW2240</name>
</gene>
<dbReference type="EMBL" id="U00096">
    <property type="protein sequence ID" value="AAC75306.2"/>
    <property type="molecule type" value="Genomic_DNA"/>
</dbReference>
<dbReference type="EMBL" id="AP009048">
    <property type="protein sequence ID" value="BAA16070.1"/>
    <property type="molecule type" value="Genomic_DNA"/>
</dbReference>
<dbReference type="PIR" id="D64995">
    <property type="entry name" value="D64995"/>
</dbReference>
<dbReference type="RefSeq" id="NP_416749.4">
    <property type="nucleotide sequence ID" value="NC_000913.3"/>
</dbReference>
<dbReference type="RefSeq" id="WP_000100890.1">
    <property type="nucleotide sequence ID" value="NZ_LN832404.1"/>
</dbReference>
<dbReference type="SMR" id="P76470"/>
<dbReference type="BioGRID" id="4260489">
    <property type="interactions" value="115"/>
</dbReference>
<dbReference type="FunCoup" id="P76470">
    <property type="interactions" value="238"/>
</dbReference>
<dbReference type="STRING" id="511145.b2246"/>
<dbReference type="TCDB" id="2.A.1.14.35">
    <property type="family name" value="the major facilitator superfamily (mfs)"/>
</dbReference>
<dbReference type="PaxDb" id="511145-b2246"/>
<dbReference type="EnsemblBacteria" id="AAC75306">
    <property type="protein sequence ID" value="AAC75306"/>
    <property type="gene ID" value="b2246"/>
</dbReference>
<dbReference type="GeneID" id="945796"/>
<dbReference type="KEGG" id="ecj:JW2240"/>
<dbReference type="KEGG" id="eco:b2246"/>
<dbReference type="KEGG" id="ecoc:C3026_12550"/>
<dbReference type="PATRIC" id="fig|511145.12.peg.2337"/>
<dbReference type="EchoBASE" id="EB3837"/>
<dbReference type="eggNOG" id="COG2271">
    <property type="taxonomic scope" value="Bacteria"/>
</dbReference>
<dbReference type="HOGENOM" id="CLU_001265_0_0_6"/>
<dbReference type="InParanoid" id="P76470"/>
<dbReference type="OMA" id="QPLFWTF"/>
<dbReference type="OrthoDB" id="9773957at2"/>
<dbReference type="PhylomeDB" id="P76470"/>
<dbReference type="BioCyc" id="EcoCyc:B2246-MONOMER"/>
<dbReference type="PRO" id="PR:P76470"/>
<dbReference type="Proteomes" id="UP000000625">
    <property type="component" value="Chromosome"/>
</dbReference>
<dbReference type="GO" id="GO:0005886">
    <property type="term" value="C:plasma membrane"/>
    <property type="evidence" value="ECO:0000314"/>
    <property type="project" value="EcoCyc"/>
</dbReference>
<dbReference type="GO" id="GO:0022857">
    <property type="term" value="F:transmembrane transporter activity"/>
    <property type="evidence" value="ECO:0000318"/>
    <property type="project" value="GO_Central"/>
</dbReference>
<dbReference type="CDD" id="cd17319">
    <property type="entry name" value="MFS_ExuT_GudP_like"/>
    <property type="match status" value="1"/>
</dbReference>
<dbReference type="FunFam" id="1.20.1250.20:FF:000214">
    <property type="entry name" value="MFS transporter"/>
    <property type="match status" value="1"/>
</dbReference>
<dbReference type="FunFam" id="1.20.1250.20:FF:000018">
    <property type="entry name" value="MFS transporter permease"/>
    <property type="match status" value="1"/>
</dbReference>
<dbReference type="Gene3D" id="1.20.1250.20">
    <property type="entry name" value="MFS general substrate transporter like domains"/>
    <property type="match status" value="2"/>
</dbReference>
<dbReference type="InterPro" id="IPR011701">
    <property type="entry name" value="MFS"/>
</dbReference>
<dbReference type="InterPro" id="IPR020846">
    <property type="entry name" value="MFS_dom"/>
</dbReference>
<dbReference type="InterPro" id="IPR036259">
    <property type="entry name" value="MFS_trans_sf"/>
</dbReference>
<dbReference type="PANTHER" id="PTHR43791:SF30">
    <property type="entry name" value="INNER MEMBRANE TRANSPORT PROTEIN RHMT"/>
    <property type="match status" value="1"/>
</dbReference>
<dbReference type="PANTHER" id="PTHR43791">
    <property type="entry name" value="PERMEASE-RELATED"/>
    <property type="match status" value="1"/>
</dbReference>
<dbReference type="Pfam" id="PF07690">
    <property type="entry name" value="MFS_1"/>
    <property type="match status" value="1"/>
</dbReference>
<dbReference type="SUPFAM" id="SSF103473">
    <property type="entry name" value="MFS general substrate transporter"/>
    <property type="match status" value="1"/>
</dbReference>
<dbReference type="PROSITE" id="PS50850">
    <property type="entry name" value="MFS"/>
    <property type="match status" value="1"/>
</dbReference>
<evidence type="ECO:0000255" key="1"/>
<evidence type="ECO:0000305" key="2"/>
<protein>
    <recommendedName>
        <fullName>Inner membrane transport protein RhmT</fullName>
    </recommendedName>
</protein>
<proteinExistence type="evidence at protein level"/>